<gene>
    <name type="ordered locus">Os10g0391300</name>
    <name type="ordered locus">LOC_Os10g25220</name>
    <name type="ORF">OsJ_030157</name>
    <name type="ORF">OsJ_31392</name>
    <name type="ORF">OSJNBb0061I18.1</name>
</gene>
<dbReference type="EMBL" id="AC079936">
    <property type="protein sequence ID" value="AAK52105.1"/>
    <property type="molecule type" value="Genomic_DNA"/>
</dbReference>
<dbReference type="EMBL" id="DP000086">
    <property type="protein sequence ID" value="ABB47500.2"/>
    <property type="molecule type" value="Genomic_DNA"/>
</dbReference>
<dbReference type="EMBL" id="AP008216">
    <property type="protein sequence ID" value="BAF26424.2"/>
    <property type="status" value="ALT_SEQ"/>
    <property type="molecule type" value="Genomic_DNA"/>
</dbReference>
<dbReference type="EMBL" id="AP014966">
    <property type="status" value="NOT_ANNOTATED_CDS"/>
    <property type="molecule type" value="Genomic_DNA"/>
</dbReference>
<dbReference type="EMBL" id="CM000147">
    <property type="protein sequence ID" value="EEE50898.1"/>
    <property type="molecule type" value="Genomic_DNA"/>
</dbReference>
<dbReference type="SMR" id="Q338N2"/>
<dbReference type="FunCoup" id="Q338N2">
    <property type="interactions" value="1"/>
</dbReference>
<dbReference type="STRING" id="39947.Q338N2"/>
<dbReference type="PaxDb" id="39947-Q338N2"/>
<dbReference type="KEGG" id="dosa:Os10g0391300"/>
<dbReference type="eggNOG" id="ENOG502QUI3">
    <property type="taxonomic scope" value="Eukaryota"/>
</dbReference>
<dbReference type="HOGENOM" id="CLU_076221_0_0_1"/>
<dbReference type="InParanoid" id="Q338N2"/>
<dbReference type="OrthoDB" id="690722at2759"/>
<dbReference type="Proteomes" id="UP000000763">
    <property type="component" value="Chromosome 10"/>
</dbReference>
<dbReference type="Proteomes" id="UP000007752">
    <property type="component" value="Chromosome 10"/>
</dbReference>
<dbReference type="Proteomes" id="UP000059680">
    <property type="component" value="Chromosome 10"/>
</dbReference>
<dbReference type="GO" id="GO:0003677">
    <property type="term" value="F:DNA binding"/>
    <property type="evidence" value="ECO:0007669"/>
    <property type="project" value="UniProtKB-KW"/>
</dbReference>
<dbReference type="GO" id="GO:0008270">
    <property type="term" value="F:zinc ion binding"/>
    <property type="evidence" value="ECO:0007669"/>
    <property type="project" value="UniProtKB-KW"/>
</dbReference>
<dbReference type="InterPro" id="IPR056116">
    <property type="entry name" value="DUF7699"/>
</dbReference>
<dbReference type="InterPro" id="IPR003034">
    <property type="entry name" value="SAP_dom"/>
</dbReference>
<dbReference type="InterPro" id="IPR000571">
    <property type="entry name" value="Znf_CCCH"/>
</dbReference>
<dbReference type="InterPro" id="IPR036855">
    <property type="entry name" value="Znf_CCCH_sf"/>
</dbReference>
<dbReference type="PANTHER" id="PTHR35323">
    <property type="entry name" value="SAP DOMAIN-CONTAINING PROTEIN"/>
    <property type="match status" value="1"/>
</dbReference>
<dbReference type="PANTHER" id="PTHR35323:SF5">
    <property type="entry name" value="ZINC FINGER CCCH DOMAIN-CONTAINING PROTEIN 62"/>
    <property type="match status" value="1"/>
</dbReference>
<dbReference type="Pfam" id="PF24766">
    <property type="entry name" value="DUF7699"/>
    <property type="match status" value="1"/>
</dbReference>
<dbReference type="Pfam" id="PF02037">
    <property type="entry name" value="SAP"/>
    <property type="match status" value="1"/>
</dbReference>
<dbReference type="Pfam" id="PF00642">
    <property type="entry name" value="zf-CCCH"/>
    <property type="match status" value="1"/>
</dbReference>
<dbReference type="SMART" id="SM00356">
    <property type="entry name" value="ZnF_C3H1"/>
    <property type="match status" value="1"/>
</dbReference>
<dbReference type="SUPFAM" id="SSF90229">
    <property type="entry name" value="CCCH zinc finger"/>
    <property type="match status" value="1"/>
</dbReference>
<dbReference type="PROSITE" id="PS50103">
    <property type="entry name" value="ZF_C3H1"/>
    <property type="match status" value="1"/>
</dbReference>
<proteinExistence type="predicted"/>
<comment type="sequence caution" evidence="3">
    <conflict type="erroneous gene model prediction">
        <sequence resource="EMBL-CDS" id="BAF26424"/>
    </conflict>
</comment>
<evidence type="ECO:0000255" key="1">
    <source>
        <dbReference type="PROSITE-ProRule" id="PRU00723"/>
    </source>
</evidence>
<evidence type="ECO:0000256" key="2">
    <source>
        <dbReference type="SAM" id="MobiDB-lite"/>
    </source>
</evidence>
<evidence type="ECO:0000305" key="3"/>
<reference key="1">
    <citation type="journal article" date="2003" name="Science">
        <title>In-depth view of structure, activity, and evolution of rice chromosome 10.</title>
        <authorList>
            <person name="Yu Y."/>
            <person name="Rambo T."/>
            <person name="Currie J."/>
            <person name="Saski C."/>
            <person name="Kim H.-R."/>
            <person name="Collura K."/>
            <person name="Thompson S."/>
            <person name="Simmons J."/>
            <person name="Yang T.-J."/>
            <person name="Nah G."/>
            <person name="Patel A.J."/>
            <person name="Thurmond S."/>
            <person name="Henry D."/>
            <person name="Oates R."/>
            <person name="Palmer M."/>
            <person name="Pries G."/>
            <person name="Gibson J."/>
            <person name="Anderson H."/>
            <person name="Paradkar M."/>
            <person name="Crane L."/>
            <person name="Dale J."/>
            <person name="Carver M.B."/>
            <person name="Wood T."/>
            <person name="Frisch D."/>
            <person name="Engler F."/>
            <person name="Soderlund C."/>
            <person name="Palmer L.E."/>
            <person name="Teytelman L."/>
            <person name="Nascimento L."/>
            <person name="De la Bastide M."/>
            <person name="Spiegel L."/>
            <person name="Ware D."/>
            <person name="O'Shaughnessy A."/>
            <person name="Dike S."/>
            <person name="Dedhia N."/>
            <person name="Preston R."/>
            <person name="Huang E."/>
            <person name="Ferraro K."/>
            <person name="Kuit K."/>
            <person name="Miller B."/>
            <person name="Zutavern T."/>
            <person name="Katzenberger F."/>
            <person name="Muller S."/>
            <person name="Balija V."/>
            <person name="Martienssen R.A."/>
            <person name="Stein L."/>
            <person name="Minx P."/>
            <person name="Johnson D."/>
            <person name="Cordum H."/>
            <person name="Mardis E."/>
            <person name="Cheng Z."/>
            <person name="Jiang J."/>
            <person name="Wilson R."/>
            <person name="McCombie W.R."/>
            <person name="Wing R.A."/>
            <person name="Yuan Q."/>
            <person name="Ouyang S."/>
            <person name="Liu J."/>
            <person name="Jones K.M."/>
            <person name="Gansberger K."/>
            <person name="Moffat K."/>
            <person name="Hill J."/>
            <person name="Tsitrin T."/>
            <person name="Overton L."/>
            <person name="Bera J."/>
            <person name="Kim M."/>
            <person name="Jin S."/>
            <person name="Tallon L."/>
            <person name="Ciecko A."/>
            <person name="Pai G."/>
            <person name="Van Aken S."/>
            <person name="Utterback T."/>
            <person name="Reidmuller S."/>
            <person name="Bormann J."/>
            <person name="Feldblyum T."/>
            <person name="Hsiao J."/>
            <person name="Zismann V."/>
            <person name="Blunt S."/>
            <person name="de Vazeille A.R."/>
            <person name="Shaffer T."/>
            <person name="Koo H."/>
            <person name="Suh B."/>
            <person name="Yang Q."/>
            <person name="Haas B."/>
            <person name="Peterson J."/>
            <person name="Pertea M."/>
            <person name="Volfovsky N."/>
            <person name="Wortman J."/>
            <person name="White O."/>
            <person name="Salzberg S.L."/>
            <person name="Fraser C.M."/>
            <person name="Buell C.R."/>
            <person name="Messing J."/>
            <person name="Song R."/>
            <person name="Fuks G."/>
            <person name="Llaca V."/>
            <person name="Kovchak S."/>
            <person name="Young S."/>
            <person name="Bowers J.E."/>
            <person name="Paterson A.H."/>
            <person name="Johns M.A."/>
            <person name="Mao L."/>
            <person name="Pan H."/>
            <person name="Dean R.A."/>
        </authorList>
    </citation>
    <scope>NUCLEOTIDE SEQUENCE [LARGE SCALE GENOMIC DNA]</scope>
    <source>
        <strain>cv. Nipponbare</strain>
    </source>
</reference>
<reference key="2">
    <citation type="journal article" date="2005" name="Nature">
        <title>The map-based sequence of the rice genome.</title>
        <authorList>
            <consortium name="International rice genome sequencing project (IRGSP)"/>
        </authorList>
    </citation>
    <scope>NUCLEOTIDE SEQUENCE [LARGE SCALE GENOMIC DNA]</scope>
    <source>
        <strain>cv. Nipponbare</strain>
    </source>
</reference>
<reference key="3">
    <citation type="journal article" date="2008" name="Nucleic Acids Res.">
        <title>The rice annotation project database (RAP-DB): 2008 update.</title>
        <authorList>
            <consortium name="The rice annotation project (RAP)"/>
        </authorList>
    </citation>
    <scope>GENOME REANNOTATION</scope>
    <source>
        <strain>cv. Nipponbare</strain>
    </source>
</reference>
<reference key="4">
    <citation type="journal article" date="2013" name="Rice">
        <title>Improvement of the Oryza sativa Nipponbare reference genome using next generation sequence and optical map data.</title>
        <authorList>
            <person name="Kawahara Y."/>
            <person name="de la Bastide M."/>
            <person name="Hamilton J.P."/>
            <person name="Kanamori H."/>
            <person name="McCombie W.R."/>
            <person name="Ouyang S."/>
            <person name="Schwartz D.C."/>
            <person name="Tanaka T."/>
            <person name="Wu J."/>
            <person name="Zhou S."/>
            <person name="Childs K.L."/>
            <person name="Davidson R.M."/>
            <person name="Lin H."/>
            <person name="Quesada-Ocampo L."/>
            <person name="Vaillancourt B."/>
            <person name="Sakai H."/>
            <person name="Lee S.S."/>
            <person name="Kim J."/>
            <person name="Numa H."/>
            <person name="Itoh T."/>
            <person name="Buell C.R."/>
            <person name="Matsumoto T."/>
        </authorList>
    </citation>
    <scope>GENOME REANNOTATION</scope>
    <source>
        <strain>cv. Nipponbare</strain>
    </source>
</reference>
<reference key="5">
    <citation type="journal article" date="2005" name="PLoS Biol.">
        <title>The genomes of Oryza sativa: a history of duplications.</title>
        <authorList>
            <person name="Yu J."/>
            <person name="Wang J."/>
            <person name="Lin W."/>
            <person name="Li S."/>
            <person name="Li H."/>
            <person name="Zhou J."/>
            <person name="Ni P."/>
            <person name="Dong W."/>
            <person name="Hu S."/>
            <person name="Zeng C."/>
            <person name="Zhang J."/>
            <person name="Zhang Y."/>
            <person name="Li R."/>
            <person name="Xu Z."/>
            <person name="Li S."/>
            <person name="Li X."/>
            <person name="Zheng H."/>
            <person name="Cong L."/>
            <person name="Lin L."/>
            <person name="Yin J."/>
            <person name="Geng J."/>
            <person name="Li G."/>
            <person name="Shi J."/>
            <person name="Liu J."/>
            <person name="Lv H."/>
            <person name="Li J."/>
            <person name="Wang J."/>
            <person name="Deng Y."/>
            <person name="Ran L."/>
            <person name="Shi X."/>
            <person name="Wang X."/>
            <person name="Wu Q."/>
            <person name="Li C."/>
            <person name="Ren X."/>
            <person name="Wang J."/>
            <person name="Wang X."/>
            <person name="Li D."/>
            <person name="Liu D."/>
            <person name="Zhang X."/>
            <person name="Ji Z."/>
            <person name="Zhao W."/>
            <person name="Sun Y."/>
            <person name="Zhang Z."/>
            <person name="Bao J."/>
            <person name="Han Y."/>
            <person name="Dong L."/>
            <person name="Ji J."/>
            <person name="Chen P."/>
            <person name="Wu S."/>
            <person name="Liu J."/>
            <person name="Xiao Y."/>
            <person name="Bu D."/>
            <person name="Tan J."/>
            <person name="Yang L."/>
            <person name="Ye C."/>
            <person name="Zhang J."/>
            <person name="Xu J."/>
            <person name="Zhou Y."/>
            <person name="Yu Y."/>
            <person name="Zhang B."/>
            <person name="Zhuang S."/>
            <person name="Wei H."/>
            <person name="Liu B."/>
            <person name="Lei M."/>
            <person name="Yu H."/>
            <person name="Li Y."/>
            <person name="Xu H."/>
            <person name="Wei S."/>
            <person name="He X."/>
            <person name="Fang L."/>
            <person name="Zhang Z."/>
            <person name="Zhang Y."/>
            <person name="Huang X."/>
            <person name="Su Z."/>
            <person name="Tong W."/>
            <person name="Li J."/>
            <person name="Tong Z."/>
            <person name="Li S."/>
            <person name="Ye J."/>
            <person name="Wang L."/>
            <person name="Fang L."/>
            <person name="Lei T."/>
            <person name="Chen C.-S."/>
            <person name="Chen H.-C."/>
            <person name="Xu Z."/>
            <person name="Li H."/>
            <person name="Huang H."/>
            <person name="Zhang F."/>
            <person name="Xu H."/>
            <person name="Li N."/>
            <person name="Zhao C."/>
            <person name="Li S."/>
            <person name="Dong L."/>
            <person name="Huang Y."/>
            <person name="Li L."/>
            <person name="Xi Y."/>
            <person name="Qi Q."/>
            <person name="Li W."/>
            <person name="Zhang B."/>
            <person name="Hu W."/>
            <person name="Zhang Y."/>
            <person name="Tian X."/>
            <person name="Jiao Y."/>
            <person name="Liang X."/>
            <person name="Jin J."/>
            <person name="Gao L."/>
            <person name="Zheng W."/>
            <person name="Hao B."/>
            <person name="Liu S.-M."/>
            <person name="Wang W."/>
            <person name="Yuan L."/>
            <person name="Cao M."/>
            <person name="McDermott J."/>
            <person name="Samudrala R."/>
            <person name="Wang J."/>
            <person name="Wong G.K.-S."/>
            <person name="Yang H."/>
        </authorList>
    </citation>
    <scope>NUCLEOTIDE SEQUENCE [LARGE SCALE GENOMIC DNA]</scope>
    <source>
        <strain>cv. Nipponbare</strain>
    </source>
</reference>
<reference key="6">
    <citation type="journal article" date="2008" name="BMC Genomics">
        <title>Genome-wide analysis of CCCH zinc finger family in Arabidopsis and rice.</title>
        <authorList>
            <person name="Wang D."/>
            <person name="Guo Y."/>
            <person name="Wu C."/>
            <person name="Yang G."/>
            <person name="Li Y."/>
            <person name="Zheng C."/>
        </authorList>
    </citation>
    <scope>NOMENCLATURE</scope>
</reference>
<accession>Q338N2</accession>
<accession>B9G5K1</accession>
<accession>Q0IXY4</accession>
<accession>Q94HD1</accession>
<sequence>MAAPAADDDDHRAALPREEDDGEEEEGSEEEVESDDEEEEEGEGYDWSEEDDPEAASLAGICDPDAGSYDDPTFDPAADGDLEVDAVLRSRMARMSLSSARKDRKGSRMPKMGKEEMDLLAMVDKLMHDGQLEKLKVYECKAYLRMHKLRLSGNKEVLLTRIRGQIEVKTMGEVKYPVSSFVLNCQGDSCKGDVVVFEQNIYKRKKGAPRGVKGHLCGQRTNAGRIIKESYGTKKQQHTFTIEILWSRGYKPWPPLHPLLIKGRNLYKDKTMRQPWLDEEERNRALQEKHARGYVARKTREVRIKDKENERMRRLNRNKENKSKGQDNMNKKSSQAVFPQHTVTTNTVQKRAEKIIPSLQHGESGNSSQQHLSSKQTPTEQLLHYLPQFPHPQQHNEVLLQKGTSRTSTTQLINHQAPSLQHAVKVETTQQQQQQQPPKSIKPAPIQQSSAYPQQYPKHQHHNQALPRVPPSQEQRAAVSQTSAARQDFTNHQAPPSRQHGGSENMRRQEISSRPTPTPTPQQAVSYTQQQPPNHQYRNEAFWQQGGTSTSRTGFMDRQSNNWGSTDHDKPAFQPFTQKAKTYQHGSNGSGHHQARVDRETHQPLRSRNQDYHWEDQSYHHQQNHHQNYYGHRQMSQDQYHHQQNHHQNYHGRQGMNGNQYHDRQNHNQNPQRFRPWKPCFIYQQQGWCPYGENCKFMHDLR</sequence>
<protein>
    <recommendedName>
        <fullName>Zinc finger CCCH domain-containing protein 62</fullName>
        <shortName>OsC3H62</shortName>
    </recommendedName>
</protein>
<keyword id="KW-0238">DNA-binding</keyword>
<keyword id="KW-0479">Metal-binding</keyword>
<keyword id="KW-1185">Reference proteome</keyword>
<keyword id="KW-0862">Zinc</keyword>
<keyword id="KW-0863">Zinc-finger</keyword>
<organism>
    <name type="scientific">Oryza sativa subsp. japonica</name>
    <name type="common">Rice</name>
    <dbReference type="NCBI Taxonomy" id="39947"/>
    <lineage>
        <taxon>Eukaryota</taxon>
        <taxon>Viridiplantae</taxon>
        <taxon>Streptophyta</taxon>
        <taxon>Embryophyta</taxon>
        <taxon>Tracheophyta</taxon>
        <taxon>Spermatophyta</taxon>
        <taxon>Magnoliopsida</taxon>
        <taxon>Liliopsida</taxon>
        <taxon>Poales</taxon>
        <taxon>Poaceae</taxon>
        <taxon>BOP clade</taxon>
        <taxon>Oryzoideae</taxon>
        <taxon>Oryzeae</taxon>
        <taxon>Oryzinae</taxon>
        <taxon>Oryza</taxon>
        <taxon>Oryza sativa</taxon>
    </lineage>
</organism>
<feature type="chain" id="PRO_0000346853" description="Zinc finger CCCH domain-containing protein 62">
    <location>
        <begin position="1"/>
        <end position="702"/>
    </location>
</feature>
<feature type="domain" description="SAP">
    <location>
        <begin position="132"/>
        <end position="166"/>
    </location>
</feature>
<feature type="zinc finger region" description="C3H1-type" evidence="1">
    <location>
        <begin position="674"/>
        <end position="702"/>
    </location>
</feature>
<feature type="region of interest" description="Disordered" evidence="2">
    <location>
        <begin position="1"/>
        <end position="77"/>
    </location>
</feature>
<feature type="region of interest" description="Disordered" evidence="2">
    <location>
        <begin position="288"/>
        <end position="349"/>
    </location>
</feature>
<feature type="region of interest" description="Disordered" evidence="2">
    <location>
        <begin position="405"/>
        <end position="532"/>
    </location>
</feature>
<feature type="region of interest" description="Disordered" evidence="2">
    <location>
        <begin position="546"/>
        <end position="602"/>
    </location>
</feature>
<feature type="region of interest" description="Disordered" evidence="2">
    <location>
        <begin position="634"/>
        <end position="673"/>
    </location>
</feature>
<feature type="compositionally biased region" description="Acidic residues" evidence="2">
    <location>
        <begin position="18"/>
        <end position="54"/>
    </location>
</feature>
<feature type="compositionally biased region" description="Basic and acidic residues" evidence="2">
    <location>
        <begin position="298"/>
        <end position="325"/>
    </location>
</feature>
<feature type="compositionally biased region" description="Polar residues" evidence="2">
    <location>
        <begin position="326"/>
        <end position="349"/>
    </location>
</feature>
<feature type="compositionally biased region" description="Polar residues" evidence="2">
    <location>
        <begin position="405"/>
        <end position="419"/>
    </location>
</feature>
<feature type="compositionally biased region" description="Low complexity" evidence="2">
    <location>
        <begin position="430"/>
        <end position="448"/>
    </location>
</feature>
<feature type="compositionally biased region" description="Polar residues" evidence="2">
    <location>
        <begin position="472"/>
        <end position="502"/>
    </location>
</feature>
<feature type="compositionally biased region" description="Polar residues" evidence="2">
    <location>
        <begin position="522"/>
        <end position="532"/>
    </location>
</feature>
<feature type="compositionally biased region" description="Polar residues" evidence="2">
    <location>
        <begin position="546"/>
        <end position="565"/>
    </location>
</feature>
<feature type="compositionally biased region" description="Polar residues" evidence="2">
    <location>
        <begin position="575"/>
        <end position="591"/>
    </location>
</feature>
<name>C3H62_ORYSJ</name>